<feature type="chain" id="PRO_1000050808" description="D-aminoacyl-tRNA deacylase">
    <location>
        <begin position="1"/>
        <end position="145"/>
    </location>
</feature>
<feature type="short sequence motif" description="Gly-cisPro motif, important for rejection of L-amino acids" evidence="1">
    <location>
        <begin position="137"/>
        <end position="138"/>
    </location>
</feature>
<dbReference type="EC" id="3.1.1.96" evidence="1"/>
<dbReference type="EMBL" id="CP000462">
    <property type="protein sequence ID" value="ABK39550.1"/>
    <property type="molecule type" value="Genomic_DNA"/>
</dbReference>
<dbReference type="RefSeq" id="WP_011704287.1">
    <property type="nucleotide sequence ID" value="NC_008570.1"/>
</dbReference>
<dbReference type="RefSeq" id="YP_854808.1">
    <property type="nucleotide sequence ID" value="NC_008570.1"/>
</dbReference>
<dbReference type="SMR" id="A0KEZ2"/>
<dbReference type="STRING" id="380703.AHA_0281"/>
<dbReference type="EnsemblBacteria" id="ABK39550">
    <property type="protein sequence ID" value="ABK39550"/>
    <property type="gene ID" value="AHA_0281"/>
</dbReference>
<dbReference type="GeneID" id="4490438"/>
<dbReference type="KEGG" id="aha:AHA_0281"/>
<dbReference type="PATRIC" id="fig|380703.7.peg.268"/>
<dbReference type="eggNOG" id="COG1490">
    <property type="taxonomic scope" value="Bacteria"/>
</dbReference>
<dbReference type="HOGENOM" id="CLU_076901_1_1_6"/>
<dbReference type="OrthoDB" id="9801395at2"/>
<dbReference type="Proteomes" id="UP000000756">
    <property type="component" value="Chromosome"/>
</dbReference>
<dbReference type="GO" id="GO:0005737">
    <property type="term" value="C:cytoplasm"/>
    <property type="evidence" value="ECO:0007669"/>
    <property type="project" value="UniProtKB-SubCell"/>
</dbReference>
<dbReference type="GO" id="GO:0051500">
    <property type="term" value="F:D-tyrosyl-tRNA(Tyr) deacylase activity"/>
    <property type="evidence" value="ECO:0007669"/>
    <property type="project" value="TreeGrafter"/>
</dbReference>
<dbReference type="GO" id="GO:0106026">
    <property type="term" value="F:Gly-tRNA(Ala) deacylase activity"/>
    <property type="evidence" value="ECO:0007669"/>
    <property type="project" value="UniProtKB-UniRule"/>
</dbReference>
<dbReference type="GO" id="GO:0043908">
    <property type="term" value="F:Ser(Gly)-tRNA(Ala) hydrolase activity"/>
    <property type="evidence" value="ECO:0007669"/>
    <property type="project" value="UniProtKB-UniRule"/>
</dbReference>
<dbReference type="GO" id="GO:0000049">
    <property type="term" value="F:tRNA binding"/>
    <property type="evidence" value="ECO:0007669"/>
    <property type="project" value="UniProtKB-UniRule"/>
</dbReference>
<dbReference type="GO" id="GO:0019478">
    <property type="term" value="P:D-amino acid catabolic process"/>
    <property type="evidence" value="ECO:0007669"/>
    <property type="project" value="UniProtKB-UniRule"/>
</dbReference>
<dbReference type="CDD" id="cd00563">
    <property type="entry name" value="Dtyr_deacylase"/>
    <property type="match status" value="1"/>
</dbReference>
<dbReference type="FunFam" id="3.50.80.10:FF:000001">
    <property type="entry name" value="D-aminoacyl-tRNA deacylase"/>
    <property type="match status" value="1"/>
</dbReference>
<dbReference type="Gene3D" id="3.50.80.10">
    <property type="entry name" value="D-tyrosyl-tRNA(Tyr) deacylase"/>
    <property type="match status" value="1"/>
</dbReference>
<dbReference type="HAMAP" id="MF_00518">
    <property type="entry name" value="Deacylase_Dtd"/>
    <property type="match status" value="1"/>
</dbReference>
<dbReference type="InterPro" id="IPR003732">
    <property type="entry name" value="Daa-tRNA_deacyls_DTD"/>
</dbReference>
<dbReference type="InterPro" id="IPR023509">
    <property type="entry name" value="DTD-like_sf"/>
</dbReference>
<dbReference type="NCBIfam" id="TIGR00256">
    <property type="entry name" value="D-aminoacyl-tRNA deacylase"/>
    <property type="match status" value="1"/>
</dbReference>
<dbReference type="PANTHER" id="PTHR10472:SF5">
    <property type="entry name" value="D-AMINOACYL-TRNA DEACYLASE 1"/>
    <property type="match status" value="1"/>
</dbReference>
<dbReference type="PANTHER" id="PTHR10472">
    <property type="entry name" value="D-TYROSYL-TRNA TYR DEACYLASE"/>
    <property type="match status" value="1"/>
</dbReference>
<dbReference type="Pfam" id="PF02580">
    <property type="entry name" value="Tyr_Deacylase"/>
    <property type="match status" value="1"/>
</dbReference>
<dbReference type="SUPFAM" id="SSF69500">
    <property type="entry name" value="DTD-like"/>
    <property type="match status" value="1"/>
</dbReference>
<comment type="function">
    <text evidence="1">An aminoacyl-tRNA editing enzyme that deacylates mischarged D-aminoacyl-tRNAs. Also deacylates mischarged glycyl-tRNA(Ala), protecting cells against glycine mischarging by AlaRS. Acts via tRNA-based rather than protein-based catalysis; rejects L-amino acids rather than detecting D-amino acids in the active site. By recycling D-aminoacyl-tRNA to D-amino acids and free tRNA molecules, this enzyme counteracts the toxicity associated with the formation of D-aminoacyl-tRNA entities in vivo and helps enforce protein L-homochirality.</text>
</comment>
<comment type="catalytic activity">
    <reaction evidence="1">
        <text>glycyl-tRNA(Ala) + H2O = tRNA(Ala) + glycine + H(+)</text>
        <dbReference type="Rhea" id="RHEA:53744"/>
        <dbReference type="Rhea" id="RHEA-COMP:9657"/>
        <dbReference type="Rhea" id="RHEA-COMP:13640"/>
        <dbReference type="ChEBI" id="CHEBI:15377"/>
        <dbReference type="ChEBI" id="CHEBI:15378"/>
        <dbReference type="ChEBI" id="CHEBI:57305"/>
        <dbReference type="ChEBI" id="CHEBI:78442"/>
        <dbReference type="ChEBI" id="CHEBI:78522"/>
        <dbReference type="EC" id="3.1.1.96"/>
    </reaction>
</comment>
<comment type="catalytic activity">
    <reaction evidence="1">
        <text>a D-aminoacyl-tRNA + H2O = a tRNA + a D-alpha-amino acid + H(+)</text>
        <dbReference type="Rhea" id="RHEA:13953"/>
        <dbReference type="Rhea" id="RHEA-COMP:10123"/>
        <dbReference type="Rhea" id="RHEA-COMP:10124"/>
        <dbReference type="ChEBI" id="CHEBI:15377"/>
        <dbReference type="ChEBI" id="CHEBI:15378"/>
        <dbReference type="ChEBI" id="CHEBI:59871"/>
        <dbReference type="ChEBI" id="CHEBI:78442"/>
        <dbReference type="ChEBI" id="CHEBI:79333"/>
        <dbReference type="EC" id="3.1.1.96"/>
    </reaction>
</comment>
<comment type="subunit">
    <text evidence="1">Homodimer.</text>
</comment>
<comment type="subcellular location">
    <subcellularLocation>
        <location evidence="1">Cytoplasm</location>
    </subcellularLocation>
</comment>
<comment type="domain">
    <text evidence="1">A Gly-cisPro motif from one monomer fits into the active site of the other monomer to allow specific chiral rejection of L-amino acids.</text>
</comment>
<comment type="similarity">
    <text evidence="1">Belongs to the DTD family.</text>
</comment>
<organism>
    <name type="scientific">Aeromonas hydrophila subsp. hydrophila (strain ATCC 7966 / DSM 30187 / BCRC 13018 / CCUG 14551 / JCM 1027 / KCTC 2358 / NCIMB 9240 / NCTC 8049)</name>
    <dbReference type="NCBI Taxonomy" id="380703"/>
    <lineage>
        <taxon>Bacteria</taxon>
        <taxon>Pseudomonadati</taxon>
        <taxon>Pseudomonadota</taxon>
        <taxon>Gammaproteobacteria</taxon>
        <taxon>Aeromonadales</taxon>
        <taxon>Aeromonadaceae</taxon>
        <taxon>Aeromonas</taxon>
    </lineage>
</organism>
<protein>
    <recommendedName>
        <fullName evidence="1">D-aminoacyl-tRNA deacylase</fullName>
        <shortName evidence="1">DTD</shortName>
        <ecNumber evidence="1">3.1.1.96</ecNumber>
    </recommendedName>
    <alternativeName>
        <fullName evidence="1">Gly-tRNA(Ala) deacylase</fullName>
    </alternativeName>
</protein>
<gene>
    <name evidence="1" type="primary">dtd</name>
    <name type="ordered locus">AHA_0281</name>
</gene>
<evidence type="ECO:0000255" key="1">
    <source>
        <dbReference type="HAMAP-Rule" id="MF_00518"/>
    </source>
</evidence>
<keyword id="KW-0963">Cytoplasm</keyword>
<keyword id="KW-0378">Hydrolase</keyword>
<keyword id="KW-1185">Reference proteome</keyword>
<keyword id="KW-0694">RNA-binding</keyword>
<keyword id="KW-0820">tRNA-binding</keyword>
<proteinExistence type="inferred from homology"/>
<reference key="1">
    <citation type="journal article" date="2006" name="J. Bacteriol.">
        <title>Genome sequence of Aeromonas hydrophila ATCC 7966T: jack of all trades.</title>
        <authorList>
            <person name="Seshadri R."/>
            <person name="Joseph S.W."/>
            <person name="Chopra A.K."/>
            <person name="Sha J."/>
            <person name="Shaw J."/>
            <person name="Graf J."/>
            <person name="Haft D.H."/>
            <person name="Wu M."/>
            <person name="Ren Q."/>
            <person name="Rosovitz M.J."/>
            <person name="Madupu R."/>
            <person name="Tallon L."/>
            <person name="Kim M."/>
            <person name="Jin S."/>
            <person name="Vuong H."/>
            <person name="Stine O.C."/>
            <person name="Ali A."/>
            <person name="Horneman A.J."/>
            <person name="Heidelberg J.F."/>
        </authorList>
    </citation>
    <scope>NUCLEOTIDE SEQUENCE [LARGE SCALE GENOMIC DNA]</scope>
    <source>
        <strain>ATCC 7966 / DSM 30187 / BCRC 13018 / CCUG 14551 / JCM 1027 / KCTC 2358 / NCIMB 9240 / NCTC 8049</strain>
    </source>
</reference>
<name>DTD_AERHH</name>
<accession>A0KEZ2</accession>
<sequence length="145" mass="15244">MIALIQRVSEASVTVEGEMTGAIGQGLLVLLGVEQGDDEAKADKLLHKVSGYRIFSDENGKMNLNVSQAGGGLLVVSQFTLAADTNKGMRPSFSGGAHPVEAERLYDYFVAQAAASGIPTATGRFAADMKVALVNDGPVTFWLQV</sequence>